<proteinExistence type="inferred from homology"/>
<protein>
    <recommendedName>
        <fullName evidence="2">Lipase chaperone</fullName>
    </recommendedName>
    <alternativeName>
        <fullName evidence="2">Lipase activator protein</fullName>
    </alternativeName>
    <alternativeName>
        <fullName evidence="2">Lipase foldase</fullName>
    </alternativeName>
    <alternativeName>
        <fullName evidence="2">Lipase helper protein</fullName>
    </alternativeName>
    <alternativeName>
        <fullName evidence="2">Lipase modulator</fullName>
    </alternativeName>
</protein>
<keyword id="KW-0997">Cell inner membrane</keyword>
<keyword id="KW-1003">Cell membrane</keyword>
<keyword id="KW-0143">Chaperone</keyword>
<keyword id="KW-0442">Lipid degradation</keyword>
<keyword id="KW-0443">Lipid metabolism</keyword>
<keyword id="KW-0472">Membrane</keyword>
<keyword id="KW-0812">Transmembrane</keyword>
<keyword id="KW-1133">Transmembrane helix</keyword>
<comment type="function">
    <text evidence="2">May be involved in the folding of the extracellular lipase during its passage through the periplasm.</text>
</comment>
<comment type="subcellular location">
    <subcellularLocation>
        <location evidence="2">Cell inner membrane</location>
        <topology evidence="2">Single-pass membrane protein</topology>
        <orientation evidence="1">Periplasmic side</orientation>
    </subcellularLocation>
</comment>
<comment type="similarity">
    <text evidence="2">Belongs to the lipase chaperone family.</text>
</comment>
<gene>
    <name evidence="2" type="primary">lifO</name>
    <name type="ordered locus">Bcen2424_3916</name>
</gene>
<feature type="chain" id="PRO_1000046912" description="Lipase chaperone">
    <location>
        <begin position="1"/>
        <end position="344"/>
    </location>
</feature>
<feature type="transmembrane region" description="Helical" evidence="2">
    <location>
        <begin position="14"/>
        <end position="34"/>
    </location>
</feature>
<organism>
    <name type="scientific">Burkholderia cenocepacia (strain HI2424)</name>
    <dbReference type="NCBI Taxonomy" id="331272"/>
    <lineage>
        <taxon>Bacteria</taxon>
        <taxon>Pseudomonadati</taxon>
        <taxon>Pseudomonadota</taxon>
        <taxon>Betaproteobacteria</taxon>
        <taxon>Burkholderiales</taxon>
        <taxon>Burkholderiaceae</taxon>
        <taxon>Burkholderia</taxon>
        <taxon>Burkholderia cepacia complex</taxon>
    </lineage>
</organism>
<accession>A0AZ27</accession>
<sequence length="344" mass="36239">MAAREGRAPLARRAAIYGVVGLAAIAGVAMWSGAGPHRGTGAAGDAPDAAAVGGVAAAAPQAAVPASAGLPPSLAGSSAPRLPLDAGGHLAKSRAVRDFFDYCLTARSDLSAAALDALVVREIAAQLDGTVAQVEALDVWHRYRAYLDALATLRDAGAVDKSDLGALQLALDQRASIAYRTLGDWSQPFFGAEQWRQRYDLARLKITQDRSLTDAQKAERLAALQQQMPADERAAQQRVDRQRAAIDQIAQLQKSGATPDAMRAQLTQTLGPEAAARVAQMQQDDASWQSRYADYAAQRAQIESAGLSPQDRDAQIAALRQRVFTKPGEAVRAASLDRGAGSAH</sequence>
<evidence type="ECO:0000250" key="1"/>
<evidence type="ECO:0000255" key="2">
    <source>
        <dbReference type="HAMAP-Rule" id="MF_00790"/>
    </source>
</evidence>
<name>LIFO_BURCH</name>
<dbReference type="EMBL" id="CP000459">
    <property type="protein sequence ID" value="ABK10653.1"/>
    <property type="molecule type" value="Genomic_DNA"/>
</dbReference>
<dbReference type="RefSeq" id="WP_011548118.1">
    <property type="nucleotide sequence ID" value="NC_008543.1"/>
</dbReference>
<dbReference type="SMR" id="A0AZ27"/>
<dbReference type="KEGG" id="bch:Bcen2424_3916"/>
<dbReference type="HOGENOM" id="CLU_064928_1_0_4"/>
<dbReference type="GO" id="GO:0005886">
    <property type="term" value="C:plasma membrane"/>
    <property type="evidence" value="ECO:0007669"/>
    <property type="project" value="UniProtKB-SubCell"/>
</dbReference>
<dbReference type="GO" id="GO:0051082">
    <property type="term" value="F:unfolded protein binding"/>
    <property type="evidence" value="ECO:0007669"/>
    <property type="project" value="UniProtKB-UniRule"/>
</dbReference>
<dbReference type="GO" id="GO:0016042">
    <property type="term" value="P:lipid catabolic process"/>
    <property type="evidence" value="ECO:0007669"/>
    <property type="project" value="UniProtKB-UniRule"/>
</dbReference>
<dbReference type="GO" id="GO:0006457">
    <property type="term" value="P:protein folding"/>
    <property type="evidence" value="ECO:0007669"/>
    <property type="project" value="UniProtKB-UniRule"/>
</dbReference>
<dbReference type="HAMAP" id="MF_00790">
    <property type="entry name" value="Lipase_chap"/>
    <property type="match status" value="1"/>
</dbReference>
<dbReference type="InterPro" id="IPR004961">
    <property type="entry name" value="Lipase_chaperone"/>
</dbReference>
<dbReference type="NCBIfam" id="NF002333">
    <property type="entry name" value="PRK01294.1-1"/>
    <property type="match status" value="1"/>
</dbReference>
<dbReference type="Pfam" id="PF03280">
    <property type="entry name" value="Lipase_chap"/>
    <property type="match status" value="1"/>
</dbReference>
<dbReference type="SUPFAM" id="SSF158855">
    <property type="entry name" value="Lipase chaperone-like"/>
    <property type="match status" value="1"/>
</dbReference>
<reference key="1">
    <citation type="submission" date="2006-08" db="EMBL/GenBank/DDBJ databases">
        <title>Complete sequence of chromosome 2 of Burkholderia cenocepacia HI2424.</title>
        <authorList>
            <person name="Copeland A."/>
            <person name="Lucas S."/>
            <person name="Lapidus A."/>
            <person name="Barry K."/>
            <person name="Detter J.C."/>
            <person name="Glavina del Rio T."/>
            <person name="Hammon N."/>
            <person name="Israni S."/>
            <person name="Pitluck S."/>
            <person name="Chain P."/>
            <person name="Malfatti S."/>
            <person name="Shin M."/>
            <person name="Vergez L."/>
            <person name="Schmutz J."/>
            <person name="Larimer F."/>
            <person name="Land M."/>
            <person name="Hauser L."/>
            <person name="Kyrpides N."/>
            <person name="Kim E."/>
            <person name="LiPuma J.J."/>
            <person name="Gonzalez C.F."/>
            <person name="Konstantinidis K."/>
            <person name="Tiedje J.M."/>
            <person name="Richardson P."/>
        </authorList>
    </citation>
    <scope>NUCLEOTIDE SEQUENCE [LARGE SCALE GENOMIC DNA]</scope>
    <source>
        <strain>HI2424</strain>
    </source>
</reference>